<protein>
    <recommendedName>
        <fullName>Growth/differentiation factor 2</fullName>
        <shortName>GDF-2</shortName>
    </recommendedName>
    <alternativeName>
        <fullName>Bone morphogenetic protein 9</fullName>
        <shortName>BMP-9</shortName>
    </alternativeName>
</protein>
<gene>
    <name type="primary">gdf2</name>
    <name type="synonym">bmp9</name>
</gene>
<comment type="function">
    <text evidence="2">Potent circulating inhibitor of angiogenesis. Signals through the type I activin receptor ACVRL1 but not other Alks. Signaling through SMAD1 in endothelial cells requires TGF-beta coreceptor endoglin/eng.</text>
</comment>
<comment type="subunit">
    <text evidence="2">Homodimer; disulfide-linked.</text>
</comment>
<comment type="subcellular location">
    <subcellularLocation>
        <location evidence="2">Secreted</location>
    </subcellularLocation>
</comment>
<comment type="PTM">
    <text evidence="2">A reversible disulfide bond can be formed between the two subunits in the homodimer; this has no effect on gdf2 activity.</text>
</comment>
<comment type="disruption phenotype">
    <text evidence="5">Morpholino knockdown of the protein causes slight decreases in both anterior-posterior and dorsal-ventral axes, while trunk and tail anatomy are otherwise normal. Vascular patterning is relatively normal, although defects are detected in maturation of the caudal vein: the caudal venous plexus fails to resolve and both dorsal and ventral veins continue to carry blood flow.</text>
</comment>
<comment type="similarity">
    <text evidence="6">Belongs to the TGF-beta family.</text>
</comment>
<keyword id="KW-0037">Angiogenesis</keyword>
<keyword id="KW-0165">Cleavage on pair of basic residues</keyword>
<keyword id="KW-0202">Cytokine</keyword>
<keyword id="KW-1015">Disulfide bond</keyword>
<keyword id="KW-0325">Glycoprotein</keyword>
<keyword id="KW-0339">Growth factor</keyword>
<keyword id="KW-1185">Reference proteome</keyword>
<keyword id="KW-0964">Secreted</keyword>
<keyword id="KW-0732">Signal</keyword>
<dbReference type="EMBL" id="EU352209">
    <property type="protein sequence ID" value="ACA57846.1"/>
    <property type="molecule type" value="mRNA"/>
</dbReference>
<dbReference type="EMBL" id="CR450691">
    <property type="status" value="NOT_ANNOTATED_CDS"/>
    <property type="molecule type" value="Genomic_DNA"/>
</dbReference>
<dbReference type="RefSeq" id="NP_001165057.2">
    <property type="nucleotide sequence ID" value="NM_001171586.2"/>
</dbReference>
<dbReference type="SMR" id="F1QWZ4"/>
<dbReference type="FunCoup" id="F1QWZ4">
    <property type="interactions" value="371"/>
</dbReference>
<dbReference type="STRING" id="7955.ENSDARP00000076657"/>
<dbReference type="GlyCosmos" id="F1QWZ4">
    <property type="glycosylation" value="5 sites, No reported glycans"/>
</dbReference>
<dbReference type="PaxDb" id="7955-ENSDARP00000076657"/>
<dbReference type="Ensembl" id="ENSDART00000082220">
    <property type="protein sequence ID" value="ENSDARP00000076657"/>
    <property type="gene ID" value="ENSDARG00000059173"/>
</dbReference>
<dbReference type="GeneID" id="563287"/>
<dbReference type="KEGG" id="dre:563287"/>
<dbReference type="AGR" id="ZFIN:ZDB-GENE-100107-1"/>
<dbReference type="CTD" id="2658"/>
<dbReference type="ZFIN" id="ZDB-GENE-100107-1">
    <property type="gene designation" value="gdf2"/>
</dbReference>
<dbReference type="eggNOG" id="KOG3900">
    <property type="taxonomic scope" value="Eukaryota"/>
</dbReference>
<dbReference type="HOGENOM" id="CLU_020515_2_0_1"/>
<dbReference type="InParanoid" id="F1QWZ4"/>
<dbReference type="OMA" id="GTFDLRM"/>
<dbReference type="OrthoDB" id="5987191at2759"/>
<dbReference type="PhylomeDB" id="F1QWZ4"/>
<dbReference type="TreeFam" id="TF316134"/>
<dbReference type="PRO" id="PR:F1QWZ4"/>
<dbReference type="Proteomes" id="UP000000437">
    <property type="component" value="Chromosome 12"/>
</dbReference>
<dbReference type="Bgee" id="ENSDARG00000059173">
    <property type="expression patterns" value="Expressed in liver and 2 other cell types or tissues"/>
</dbReference>
<dbReference type="GO" id="GO:0005615">
    <property type="term" value="C:extracellular space"/>
    <property type="evidence" value="ECO:0000318"/>
    <property type="project" value="GO_Central"/>
</dbReference>
<dbReference type="GO" id="GO:0005125">
    <property type="term" value="F:cytokine activity"/>
    <property type="evidence" value="ECO:0000318"/>
    <property type="project" value="GO_Central"/>
</dbReference>
<dbReference type="GO" id="GO:0008083">
    <property type="term" value="F:growth factor activity"/>
    <property type="evidence" value="ECO:0007669"/>
    <property type="project" value="UniProtKB-KW"/>
</dbReference>
<dbReference type="GO" id="GO:0001525">
    <property type="term" value="P:angiogenesis"/>
    <property type="evidence" value="ECO:0000315"/>
    <property type="project" value="UniProtKB"/>
</dbReference>
<dbReference type="GO" id="GO:0030509">
    <property type="term" value="P:BMP signaling pathway"/>
    <property type="evidence" value="ECO:0000318"/>
    <property type="project" value="GO_Central"/>
</dbReference>
<dbReference type="CDD" id="cd19400">
    <property type="entry name" value="TGF_beta_BMP9"/>
    <property type="match status" value="1"/>
</dbReference>
<dbReference type="FunFam" id="2.60.120.970:FF:000037">
    <property type="entry name" value="Bone morphogenetic protein 10"/>
    <property type="match status" value="1"/>
</dbReference>
<dbReference type="FunFam" id="2.10.90.10:FF:000001">
    <property type="entry name" value="Bone morphogenetic protein 4"/>
    <property type="match status" value="1"/>
</dbReference>
<dbReference type="Gene3D" id="2.60.120.970">
    <property type="match status" value="1"/>
</dbReference>
<dbReference type="Gene3D" id="2.10.90.10">
    <property type="entry name" value="Cystine-knot cytokines"/>
    <property type="match status" value="1"/>
</dbReference>
<dbReference type="InterPro" id="IPR029034">
    <property type="entry name" value="Cystine-knot_cytokine"/>
</dbReference>
<dbReference type="InterPro" id="IPR001839">
    <property type="entry name" value="TGF-b_C"/>
</dbReference>
<dbReference type="InterPro" id="IPR001111">
    <property type="entry name" value="TGF-b_propeptide"/>
</dbReference>
<dbReference type="InterPro" id="IPR015615">
    <property type="entry name" value="TGF-beta-rel"/>
</dbReference>
<dbReference type="InterPro" id="IPR017948">
    <property type="entry name" value="TGFb_CS"/>
</dbReference>
<dbReference type="PANTHER" id="PTHR11848:SF157">
    <property type="entry name" value="GROWTH_DIFFERENTIATION FACTOR 2"/>
    <property type="match status" value="1"/>
</dbReference>
<dbReference type="PANTHER" id="PTHR11848">
    <property type="entry name" value="TGF-BETA FAMILY"/>
    <property type="match status" value="1"/>
</dbReference>
<dbReference type="Pfam" id="PF00019">
    <property type="entry name" value="TGF_beta"/>
    <property type="match status" value="1"/>
</dbReference>
<dbReference type="Pfam" id="PF00688">
    <property type="entry name" value="TGFb_propeptide"/>
    <property type="match status" value="1"/>
</dbReference>
<dbReference type="PRINTS" id="PR00669">
    <property type="entry name" value="INHIBINA"/>
</dbReference>
<dbReference type="SMART" id="SM00204">
    <property type="entry name" value="TGFB"/>
    <property type="match status" value="1"/>
</dbReference>
<dbReference type="SUPFAM" id="SSF57501">
    <property type="entry name" value="Cystine-knot cytokines"/>
    <property type="match status" value="1"/>
</dbReference>
<dbReference type="PROSITE" id="PS00250">
    <property type="entry name" value="TGF_BETA_1"/>
    <property type="match status" value="1"/>
</dbReference>
<dbReference type="PROSITE" id="PS51362">
    <property type="entry name" value="TGF_BETA_2"/>
    <property type="match status" value="1"/>
</dbReference>
<accession>F1QWZ4</accession>
<accession>D2CN90</accession>
<reference key="1">
    <citation type="submission" date="2007-12" db="EMBL/GenBank/DDBJ databases">
        <title>Cloning and developmental expression of BMP9 and BMP3b from Zebrafish.</title>
        <authorList>
            <person name="Shravage B.V."/>
            <person name="Roman B.L."/>
        </authorList>
    </citation>
    <scope>NUCLEOTIDE SEQUENCE [MRNA]</scope>
</reference>
<reference key="2">
    <citation type="journal article" date="2013" name="Nature">
        <title>The zebrafish reference genome sequence and its relationship to the human genome.</title>
        <authorList>
            <person name="Howe K."/>
            <person name="Clark M.D."/>
            <person name="Torroja C.F."/>
            <person name="Torrance J."/>
            <person name="Berthelot C."/>
            <person name="Muffato M."/>
            <person name="Collins J.E."/>
            <person name="Humphray S."/>
            <person name="McLaren K."/>
            <person name="Matthews L."/>
            <person name="McLaren S."/>
            <person name="Sealy I."/>
            <person name="Caccamo M."/>
            <person name="Churcher C."/>
            <person name="Scott C."/>
            <person name="Barrett J.C."/>
            <person name="Koch R."/>
            <person name="Rauch G.J."/>
            <person name="White S."/>
            <person name="Chow W."/>
            <person name="Kilian B."/>
            <person name="Quintais L.T."/>
            <person name="Guerra-Assuncao J.A."/>
            <person name="Zhou Y."/>
            <person name="Gu Y."/>
            <person name="Yen J."/>
            <person name="Vogel J.H."/>
            <person name="Eyre T."/>
            <person name="Redmond S."/>
            <person name="Banerjee R."/>
            <person name="Chi J."/>
            <person name="Fu B."/>
            <person name="Langley E."/>
            <person name="Maguire S.F."/>
            <person name="Laird G.K."/>
            <person name="Lloyd D."/>
            <person name="Kenyon E."/>
            <person name="Donaldson S."/>
            <person name="Sehra H."/>
            <person name="Almeida-King J."/>
            <person name="Loveland J."/>
            <person name="Trevanion S."/>
            <person name="Jones M."/>
            <person name="Quail M."/>
            <person name="Willey D."/>
            <person name="Hunt A."/>
            <person name="Burton J."/>
            <person name="Sims S."/>
            <person name="McLay K."/>
            <person name="Plumb B."/>
            <person name="Davis J."/>
            <person name="Clee C."/>
            <person name="Oliver K."/>
            <person name="Clark R."/>
            <person name="Riddle C."/>
            <person name="Elliot D."/>
            <person name="Threadgold G."/>
            <person name="Harden G."/>
            <person name="Ware D."/>
            <person name="Begum S."/>
            <person name="Mortimore B."/>
            <person name="Kerry G."/>
            <person name="Heath P."/>
            <person name="Phillimore B."/>
            <person name="Tracey A."/>
            <person name="Corby N."/>
            <person name="Dunn M."/>
            <person name="Johnson C."/>
            <person name="Wood J."/>
            <person name="Clark S."/>
            <person name="Pelan S."/>
            <person name="Griffiths G."/>
            <person name="Smith M."/>
            <person name="Glithero R."/>
            <person name="Howden P."/>
            <person name="Barker N."/>
            <person name="Lloyd C."/>
            <person name="Stevens C."/>
            <person name="Harley J."/>
            <person name="Holt K."/>
            <person name="Panagiotidis G."/>
            <person name="Lovell J."/>
            <person name="Beasley H."/>
            <person name="Henderson C."/>
            <person name="Gordon D."/>
            <person name="Auger K."/>
            <person name="Wright D."/>
            <person name="Collins J."/>
            <person name="Raisen C."/>
            <person name="Dyer L."/>
            <person name="Leung K."/>
            <person name="Robertson L."/>
            <person name="Ambridge K."/>
            <person name="Leongamornlert D."/>
            <person name="McGuire S."/>
            <person name="Gilderthorp R."/>
            <person name="Griffiths C."/>
            <person name="Manthravadi D."/>
            <person name="Nichol S."/>
            <person name="Barker G."/>
            <person name="Whitehead S."/>
            <person name="Kay M."/>
            <person name="Brown J."/>
            <person name="Murnane C."/>
            <person name="Gray E."/>
            <person name="Humphries M."/>
            <person name="Sycamore N."/>
            <person name="Barker D."/>
            <person name="Saunders D."/>
            <person name="Wallis J."/>
            <person name="Babbage A."/>
            <person name="Hammond S."/>
            <person name="Mashreghi-Mohammadi M."/>
            <person name="Barr L."/>
            <person name="Martin S."/>
            <person name="Wray P."/>
            <person name="Ellington A."/>
            <person name="Matthews N."/>
            <person name="Ellwood M."/>
            <person name="Woodmansey R."/>
            <person name="Clark G."/>
            <person name="Cooper J."/>
            <person name="Tromans A."/>
            <person name="Grafham D."/>
            <person name="Skuce C."/>
            <person name="Pandian R."/>
            <person name="Andrews R."/>
            <person name="Harrison E."/>
            <person name="Kimberley A."/>
            <person name="Garnett J."/>
            <person name="Fosker N."/>
            <person name="Hall R."/>
            <person name="Garner P."/>
            <person name="Kelly D."/>
            <person name="Bird C."/>
            <person name="Palmer S."/>
            <person name="Gehring I."/>
            <person name="Berger A."/>
            <person name="Dooley C.M."/>
            <person name="Ersan-Urun Z."/>
            <person name="Eser C."/>
            <person name="Geiger H."/>
            <person name="Geisler M."/>
            <person name="Karotki L."/>
            <person name="Kirn A."/>
            <person name="Konantz J."/>
            <person name="Konantz M."/>
            <person name="Oberlander M."/>
            <person name="Rudolph-Geiger S."/>
            <person name="Teucke M."/>
            <person name="Lanz C."/>
            <person name="Raddatz G."/>
            <person name="Osoegawa K."/>
            <person name="Zhu B."/>
            <person name="Rapp A."/>
            <person name="Widaa S."/>
            <person name="Langford C."/>
            <person name="Yang F."/>
            <person name="Schuster S.C."/>
            <person name="Carter N.P."/>
            <person name="Harrow J."/>
            <person name="Ning Z."/>
            <person name="Herrero J."/>
            <person name="Searle S.M."/>
            <person name="Enright A."/>
            <person name="Geisler R."/>
            <person name="Plasterk R.H."/>
            <person name="Lee C."/>
            <person name="Westerfield M."/>
            <person name="de Jong P.J."/>
            <person name="Zon L.I."/>
            <person name="Postlethwait J.H."/>
            <person name="Nusslein-Volhard C."/>
            <person name="Hubbard T.J."/>
            <person name="Roest Crollius H."/>
            <person name="Rogers J."/>
            <person name="Stemple D.L."/>
        </authorList>
    </citation>
    <scope>NUCLEOTIDE SEQUENCE [LARGE SCALE GENOMIC DNA]</scope>
    <source>
        <strain>Tuebingen</strain>
    </source>
</reference>
<reference key="3">
    <citation type="journal article" date="2013" name="Am. J. Hum. Genet.">
        <title>BMP9 mutations cause a vascular-anomaly syndrome with phenotypic overlap with hereditary hemorrhagic telangiectasia.</title>
        <authorList>
            <person name="Wooderchak-Donahue W.L."/>
            <person name="McDonald J."/>
            <person name="O'Fallon B."/>
            <person name="Upton P.D."/>
            <person name="Li W."/>
            <person name="Roman B.L."/>
            <person name="Young S."/>
            <person name="Plant P."/>
            <person name="Fulop G.T."/>
            <person name="Langa C."/>
            <person name="Morrell N.W."/>
            <person name="Botella L.M."/>
            <person name="Bernabeu C."/>
            <person name="Stevenson D.A."/>
            <person name="Runo J.R."/>
            <person name="Bayrak-Toydemir P."/>
        </authorList>
    </citation>
    <scope>DISRUPTION PHENOTYPE</scope>
</reference>
<feature type="signal peptide" evidence="3">
    <location>
        <begin position="1"/>
        <end position="20"/>
    </location>
</feature>
<feature type="propeptide" id="PRO_0000425903" evidence="1">
    <location>
        <begin position="21"/>
        <end position="280"/>
    </location>
</feature>
<feature type="chain" id="PRO_0000425904" description="Growth/differentiation factor 2">
    <location>
        <begin position="281"/>
        <end position="389"/>
    </location>
</feature>
<feature type="region of interest" description="Disordered" evidence="4">
    <location>
        <begin position="263"/>
        <end position="284"/>
    </location>
</feature>
<feature type="compositionally biased region" description="Polar residues" evidence="4">
    <location>
        <begin position="263"/>
        <end position="272"/>
    </location>
</feature>
<feature type="compositionally biased region" description="Basic residues" evidence="4">
    <location>
        <begin position="274"/>
        <end position="284"/>
    </location>
</feature>
<feature type="glycosylation site" description="N-linked (GlcNAc...) asparagine" evidence="3">
    <location>
        <position position="65"/>
    </location>
</feature>
<feature type="glycosylation site" description="N-linked (GlcNAc...) asparagine" evidence="3">
    <location>
        <position position="118"/>
    </location>
</feature>
<feature type="glycosylation site" description="N-linked (GlcNAc...) asparagine" evidence="3">
    <location>
        <position position="127"/>
    </location>
</feature>
<feature type="glycosylation site" description="N-linked (GlcNAc...) asparagine" evidence="3">
    <location>
        <position position="232"/>
    </location>
</feature>
<feature type="glycosylation site" description="N-linked (GlcNAc...) asparagine" evidence="3">
    <location>
        <position position="342"/>
    </location>
</feature>
<feature type="disulfide bond" evidence="2">
    <location>
        <begin position="288"/>
        <end position="354"/>
    </location>
</feature>
<feature type="disulfide bond" evidence="2">
    <location>
        <begin position="317"/>
        <end position="386"/>
    </location>
</feature>
<feature type="disulfide bond" evidence="2">
    <location>
        <begin position="321"/>
        <end position="388"/>
    </location>
</feature>
<feature type="disulfide bond" description="Interchain" evidence="2">
    <location>
        <position position="353"/>
    </location>
</feature>
<feature type="sequence conflict" description="In Ref. 1; ACA57846." evidence="6" ref="1">
    <original>G</original>
    <variation>A</variation>
    <location>
        <position position="27"/>
    </location>
</feature>
<feature type="sequence conflict" description="In Ref. 1; ACA57846." evidence="6" ref="1">
    <original>R</original>
    <variation>G</variation>
    <location>
        <position position="206"/>
    </location>
</feature>
<feature type="sequence conflict" description="In Ref. 1; ACA57846." evidence="6" ref="1">
    <original>V</original>
    <variation>VF</variation>
    <location>
        <position position="239"/>
    </location>
</feature>
<organism>
    <name type="scientific">Danio rerio</name>
    <name type="common">Zebrafish</name>
    <name type="synonym">Brachydanio rerio</name>
    <dbReference type="NCBI Taxonomy" id="7955"/>
    <lineage>
        <taxon>Eukaryota</taxon>
        <taxon>Metazoa</taxon>
        <taxon>Chordata</taxon>
        <taxon>Craniata</taxon>
        <taxon>Vertebrata</taxon>
        <taxon>Euteleostomi</taxon>
        <taxon>Actinopterygii</taxon>
        <taxon>Neopterygii</taxon>
        <taxon>Teleostei</taxon>
        <taxon>Ostariophysi</taxon>
        <taxon>Cypriniformes</taxon>
        <taxon>Danionidae</taxon>
        <taxon>Danioninae</taxon>
        <taxon>Danio</taxon>
    </lineage>
</organism>
<name>GDF2_DANRE</name>
<evidence type="ECO:0000250" key="1"/>
<evidence type="ECO:0000250" key="2">
    <source>
        <dbReference type="UniProtKB" id="Q9UK05"/>
    </source>
</evidence>
<evidence type="ECO:0000255" key="3"/>
<evidence type="ECO:0000256" key="4">
    <source>
        <dbReference type="SAM" id="MobiDB-lite"/>
    </source>
</evidence>
<evidence type="ECO:0000269" key="5">
    <source>
    </source>
</evidence>
<evidence type="ECO:0000305" key="6"/>
<sequence>MWRVGHLLLLMSIVFRITEEKSLGDAGSLEDSMFIQEQKLVEDDDLNKVESFLGFMKEDFLRKLNLSGVPQEHRKVQPPQFMIELYNRYASDKNSIPRSDVIRSFVVQDVIYSIRQGNKTQHRLLFNVSIPNHEEITSVQLRLFTLWHRHKPACDDLFTSINVYDVEYEQNAKILHLLDGRDVRESINTWEAFDVTGAVRIWHESRRGAGEIQVEVQHSCDSFDISLSLEDNSSAVVIVFSDDLGNRKEESMRKVKEMLVREQQQVGNQAPVSNRHRRRKRKAKNNYCRRTSLKVNFKDIGWDKWIVAPPEYDAYECKGVCYFPLTDDVSPSRHAVIQTLVNLSNPKKANMACCVPTKLDPIAVMYQEKGVITVRHLYEEMKVAKCGCR</sequence>
<proteinExistence type="evidence at transcript level"/>